<evidence type="ECO:0000255" key="1">
    <source>
        <dbReference type="HAMAP-Rule" id="MF_00008"/>
    </source>
</evidence>
<comment type="function">
    <text evidence="1">Catalyzes the reductive methylation of 2'-deoxyuridine-5'-monophosphate (dUMP) to 2'-deoxythymidine-5'-monophosphate (dTMP) while utilizing 5,10-methylenetetrahydrofolate (mTHF) as the methyl donor and reductant in the reaction, yielding dihydrofolate (DHF) as a by-product. This enzymatic reaction provides an intracellular de novo source of dTMP, an essential precursor for DNA biosynthesis.</text>
</comment>
<comment type="catalytic activity">
    <reaction evidence="1">
        <text>dUMP + (6R)-5,10-methylene-5,6,7,8-tetrahydrofolate = 7,8-dihydrofolate + dTMP</text>
        <dbReference type="Rhea" id="RHEA:12104"/>
        <dbReference type="ChEBI" id="CHEBI:15636"/>
        <dbReference type="ChEBI" id="CHEBI:57451"/>
        <dbReference type="ChEBI" id="CHEBI:63528"/>
        <dbReference type="ChEBI" id="CHEBI:246422"/>
        <dbReference type="EC" id="2.1.1.45"/>
    </reaction>
</comment>
<comment type="pathway">
    <text evidence="1">Pyrimidine metabolism; dTTP biosynthesis.</text>
</comment>
<comment type="subunit">
    <text evidence="1">Homodimer.</text>
</comment>
<comment type="subcellular location">
    <subcellularLocation>
        <location evidence="1">Cytoplasm</location>
    </subcellularLocation>
</comment>
<comment type="similarity">
    <text evidence="1">Belongs to the thymidylate synthase family. Bacterial-type ThyA subfamily.</text>
</comment>
<feature type="chain" id="PRO_0000141021" description="Thymidylate synthase">
    <location>
        <begin position="1"/>
        <end position="318"/>
    </location>
</feature>
<feature type="active site" description="Nucleophile" evidence="1">
    <location>
        <position position="201"/>
    </location>
</feature>
<feature type="binding site" description="in other chain" evidence="1">
    <location>
        <position position="26"/>
    </location>
    <ligand>
        <name>dUMP</name>
        <dbReference type="ChEBI" id="CHEBI:246422"/>
        <note>ligand shared between dimeric partners</note>
    </ligand>
</feature>
<feature type="binding site" evidence="1">
    <location>
        <begin position="181"/>
        <end position="182"/>
    </location>
    <ligand>
        <name>dUMP</name>
        <dbReference type="ChEBI" id="CHEBI:246422"/>
        <note>ligand shared between dimeric partners</note>
    </ligand>
</feature>
<feature type="binding site" description="in other chain" evidence="1">
    <location>
        <begin position="221"/>
        <end position="224"/>
    </location>
    <ligand>
        <name>dUMP</name>
        <dbReference type="ChEBI" id="CHEBI:246422"/>
        <note>ligand shared between dimeric partners</note>
    </ligand>
</feature>
<feature type="binding site" evidence="1">
    <location>
        <position position="224"/>
    </location>
    <ligand>
        <name>(6R)-5,10-methylene-5,6,7,8-tetrahydrofolate</name>
        <dbReference type="ChEBI" id="CHEBI:15636"/>
    </ligand>
</feature>
<feature type="binding site" description="in other chain" evidence="1">
    <location>
        <position position="232"/>
    </location>
    <ligand>
        <name>dUMP</name>
        <dbReference type="ChEBI" id="CHEBI:246422"/>
        <note>ligand shared between dimeric partners</note>
    </ligand>
</feature>
<feature type="binding site" description="in other chain" evidence="1">
    <location>
        <begin position="262"/>
        <end position="264"/>
    </location>
    <ligand>
        <name>dUMP</name>
        <dbReference type="ChEBI" id="CHEBI:246422"/>
        <note>ligand shared between dimeric partners</note>
    </ligand>
</feature>
<feature type="binding site" evidence="1">
    <location>
        <position position="317"/>
    </location>
    <ligand>
        <name>(6R)-5,10-methylene-5,6,7,8-tetrahydrofolate</name>
        <dbReference type="ChEBI" id="CHEBI:15636"/>
    </ligand>
</feature>
<organism>
    <name type="scientific">Staphylococcus aureus (strain MSSA476)</name>
    <dbReference type="NCBI Taxonomy" id="282459"/>
    <lineage>
        <taxon>Bacteria</taxon>
        <taxon>Bacillati</taxon>
        <taxon>Bacillota</taxon>
        <taxon>Bacilli</taxon>
        <taxon>Bacillales</taxon>
        <taxon>Staphylococcaceae</taxon>
        <taxon>Staphylococcus</taxon>
    </lineage>
</organism>
<protein>
    <recommendedName>
        <fullName evidence="1">Thymidylate synthase</fullName>
        <shortName evidence="1">TS</shortName>
        <shortName evidence="1">TSase</shortName>
        <ecNumber evidence="1">2.1.1.45</ecNumber>
    </recommendedName>
</protein>
<keyword id="KW-0963">Cytoplasm</keyword>
<keyword id="KW-0489">Methyltransferase</keyword>
<keyword id="KW-0545">Nucleotide biosynthesis</keyword>
<keyword id="KW-0808">Transferase</keyword>
<sequence length="318" mass="36825">MLNSFDAAYHSLCEEVLEIGNTRNDRTNTGTISKFGHQLRFDLSKGFPLLTTKKVSFKLVATELLWFIKGDTNIQYLLKYNNNIWNEWAFENYIKSDEYNGPDMTDFGHRALSDPEFNEQYKEQMKQFKQRILEDDTFAKQFGDLGNVYGKQWRDWVDKDGNHFDQLKTVIEQIKHNPDSRRHIVSAWNPTEIDTMALPPCHTMFQFYVQDGKLSCQLYQRSADIFLGVPFNIASYALLTHLIAKECGLEVGEFVHTFGDAHIYSNHIDAIQTQLARESFNPPTLKINSDKSIFDINYEDLEIVDYESHPAIKAPIAV</sequence>
<dbReference type="EC" id="2.1.1.45" evidence="1"/>
<dbReference type="EMBL" id="BX571857">
    <property type="protein sequence ID" value="CAG43146.1"/>
    <property type="molecule type" value="Genomic_DNA"/>
</dbReference>
<dbReference type="RefSeq" id="WP_000934894.1">
    <property type="nucleotide sequence ID" value="NC_002953.3"/>
</dbReference>
<dbReference type="SMR" id="Q6G9D4"/>
<dbReference type="KEGG" id="sas:SAS1370"/>
<dbReference type="HOGENOM" id="CLU_021669_0_2_9"/>
<dbReference type="UniPathway" id="UPA00575"/>
<dbReference type="GO" id="GO:0005829">
    <property type="term" value="C:cytosol"/>
    <property type="evidence" value="ECO:0007669"/>
    <property type="project" value="TreeGrafter"/>
</dbReference>
<dbReference type="GO" id="GO:0004799">
    <property type="term" value="F:thymidylate synthase activity"/>
    <property type="evidence" value="ECO:0007669"/>
    <property type="project" value="UniProtKB-UniRule"/>
</dbReference>
<dbReference type="GO" id="GO:0006231">
    <property type="term" value="P:dTMP biosynthetic process"/>
    <property type="evidence" value="ECO:0007669"/>
    <property type="project" value="UniProtKB-UniRule"/>
</dbReference>
<dbReference type="GO" id="GO:0006235">
    <property type="term" value="P:dTTP biosynthetic process"/>
    <property type="evidence" value="ECO:0007669"/>
    <property type="project" value="UniProtKB-UniRule"/>
</dbReference>
<dbReference type="GO" id="GO:0032259">
    <property type="term" value="P:methylation"/>
    <property type="evidence" value="ECO:0007669"/>
    <property type="project" value="UniProtKB-KW"/>
</dbReference>
<dbReference type="CDD" id="cd00351">
    <property type="entry name" value="TS_Pyrimidine_HMase"/>
    <property type="match status" value="1"/>
</dbReference>
<dbReference type="Gene3D" id="3.30.572.10">
    <property type="entry name" value="Thymidylate synthase/dCMP hydroxymethylase domain"/>
    <property type="match status" value="1"/>
</dbReference>
<dbReference type="HAMAP" id="MF_00008">
    <property type="entry name" value="Thymidy_synth_bact"/>
    <property type="match status" value="1"/>
</dbReference>
<dbReference type="InterPro" id="IPR045097">
    <property type="entry name" value="Thymidate_synth/dCMP_Mease"/>
</dbReference>
<dbReference type="InterPro" id="IPR023451">
    <property type="entry name" value="Thymidate_synth/dCMP_Mease_dom"/>
</dbReference>
<dbReference type="InterPro" id="IPR036926">
    <property type="entry name" value="Thymidate_synth/dCMP_Mease_sf"/>
</dbReference>
<dbReference type="InterPro" id="IPR000398">
    <property type="entry name" value="Thymidylate_synthase"/>
</dbReference>
<dbReference type="InterPro" id="IPR020940">
    <property type="entry name" value="Thymidylate_synthase_AS"/>
</dbReference>
<dbReference type="NCBIfam" id="NF002496">
    <property type="entry name" value="PRK01827.1-2"/>
    <property type="match status" value="1"/>
</dbReference>
<dbReference type="NCBIfam" id="TIGR03284">
    <property type="entry name" value="thym_sym"/>
    <property type="match status" value="1"/>
</dbReference>
<dbReference type="PANTHER" id="PTHR11548:SF9">
    <property type="entry name" value="THYMIDYLATE SYNTHASE"/>
    <property type="match status" value="1"/>
</dbReference>
<dbReference type="PANTHER" id="PTHR11548">
    <property type="entry name" value="THYMIDYLATE SYNTHASE 1"/>
    <property type="match status" value="1"/>
</dbReference>
<dbReference type="Pfam" id="PF00303">
    <property type="entry name" value="Thymidylat_synt"/>
    <property type="match status" value="1"/>
</dbReference>
<dbReference type="PRINTS" id="PR00108">
    <property type="entry name" value="THYMDSNTHASE"/>
</dbReference>
<dbReference type="SUPFAM" id="SSF55831">
    <property type="entry name" value="Thymidylate synthase/dCMP hydroxymethylase"/>
    <property type="match status" value="1"/>
</dbReference>
<dbReference type="PROSITE" id="PS00091">
    <property type="entry name" value="THYMIDYLATE_SYNTHASE"/>
    <property type="match status" value="1"/>
</dbReference>
<gene>
    <name evidence="1" type="primary">thyA</name>
    <name type="ordered locus">SAS1370</name>
</gene>
<proteinExistence type="inferred from homology"/>
<accession>Q6G9D4</accession>
<reference key="1">
    <citation type="journal article" date="2004" name="Proc. Natl. Acad. Sci. U.S.A.">
        <title>Complete genomes of two clinical Staphylococcus aureus strains: evidence for the rapid evolution of virulence and drug resistance.</title>
        <authorList>
            <person name="Holden M.T.G."/>
            <person name="Feil E.J."/>
            <person name="Lindsay J.A."/>
            <person name="Peacock S.J."/>
            <person name="Day N.P.J."/>
            <person name="Enright M.C."/>
            <person name="Foster T.J."/>
            <person name="Moore C.E."/>
            <person name="Hurst L."/>
            <person name="Atkin R."/>
            <person name="Barron A."/>
            <person name="Bason N."/>
            <person name="Bentley S.D."/>
            <person name="Chillingworth C."/>
            <person name="Chillingworth T."/>
            <person name="Churcher C."/>
            <person name="Clark L."/>
            <person name="Corton C."/>
            <person name="Cronin A."/>
            <person name="Doggett J."/>
            <person name="Dowd L."/>
            <person name="Feltwell T."/>
            <person name="Hance Z."/>
            <person name="Harris B."/>
            <person name="Hauser H."/>
            <person name="Holroyd S."/>
            <person name="Jagels K."/>
            <person name="James K.D."/>
            <person name="Lennard N."/>
            <person name="Line A."/>
            <person name="Mayes R."/>
            <person name="Moule S."/>
            <person name="Mungall K."/>
            <person name="Ormond D."/>
            <person name="Quail M.A."/>
            <person name="Rabbinowitsch E."/>
            <person name="Rutherford K.M."/>
            <person name="Sanders M."/>
            <person name="Sharp S."/>
            <person name="Simmonds M."/>
            <person name="Stevens K."/>
            <person name="Whitehead S."/>
            <person name="Barrell B.G."/>
            <person name="Spratt B.G."/>
            <person name="Parkhill J."/>
        </authorList>
    </citation>
    <scope>NUCLEOTIDE SEQUENCE [LARGE SCALE GENOMIC DNA]</scope>
    <source>
        <strain>MSSA476</strain>
    </source>
</reference>
<name>TYSY_STAAS</name>